<dbReference type="EC" id="3.6.1.7"/>
<dbReference type="EMBL" id="CP000148">
    <property type="protein sequence ID" value="ABB32947.1"/>
    <property type="molecule type" value="Genomic_DNA"/>
</dbReference>
<dbReference type="RefSeq" id="WP_004511731.1">
    <property type="nucleotide sequence ID" value="NC_007517.1"/>
</dbReference>
<dbReference type="SMR" id="Q39S27"/>
<dbReference type="STRING" id="269799.Gmet_2729"/>
<dbReference type="KEGG" id="gme:Gmet_2729"/>
<dbReference type="eggNOG" id="COG1254">
    <property type="taxonomic scope" value="Bacteria"/>
</dbReference>
<dbReference type="HOGENOM" id="CLU_141932_1_0_7"/>
<dbReference type="Proteomes" id="UP000007073">
    <property type="component" value="Chromosome"/>
</dbReference>
<dbReference type="GO" id="GO:0003998">
    <property type="term" value="F:acylphosphatase activity"/>
    <property type="evidence" value="ECO:0007669"/>
    <property type="project" value="UniProtKB-EC"/>
</dbReference>
<dbReference type="Gene3D" id="3.30.70.100">
    <property type="match status" value="1"/>
</dbReference>
<dbReference type="InterPro" id="IPR020456">
    <property type="entry name" value="Acylphosphatase"/>
</dbReference>
<dbReference type="InterPro" id="IPR001792">
    <property type="entry name" value="Acylphosphatase-like_dom"/>
</dbReference>
<dbReference type="InterPro" id="IPR036046">
    <property type="entry name" value="Acylphosphatase-like_dom_sf"/>
</dbReference>
<dbReference type="InterPro" id="IPR017968">
    <property type="entry name" value="Acylphosphatase_CS"/>
</dbReference>
<dbReference type="NCBIfam" id="NF011011">
    <property type="entry name" value="PRK14438.1"/>
    <property type="match status" value="1"/>
</dbReference>
<dbReference type="PANTHER" id="PTHR47268">
    <property type="entry name" value="ACYLPHOSPHATASE"/>
    <property type="match status" value="1"/>
</dbReference>
<dbReference type="PANTHER" id="PTHR47268:SF4">
    <property type="entry name" value="ACYLPHOSPHATASE"/>
    <property type="match status" value="1"/>
</dbReference>
<dbReference type="Pfam" id="PF00708">
    <property type="entry name" value="Acylphosphatase"/>
    <property type="match status" value="1"/>
</dbReference>
<dbReference type="PRINTS" id="PR00112">
    <property type="entry name" value="ACYLPHPHTASE"/>
</dbReference>
<dbReference type="SUPFAM" id="SSF54975">
    <property type="entry name" value="Acylphosphatase/BLUF domain-like"/>
    <property type="match status" value="1"/>
</dbReference>
<dbReference type="PROSITE" id="PS00150">
    <property type="entry name" value="ACYLPHOSPHATASE_1"/>
    <property type="match status" value="1"/>
</dbReference>
<dbReference type="PROSITE" id="PS00151">
    <property type="entry name" value="ACYLPHOSPHATASE_2"/>
    <property type="match status" value="1"/>
</dbReference>
<dbReference type="PROSITE" id="PS51160">
    <property type="entry name" value="ACYLPHOSPHATASE_3"/>
    <property type="match status" value="1"/>
</dbReference>
<feature type="chain" id="PRO_0000326715" description="Acylphosphatase">
    <location>
        <begin position="1"/>
        <end position="93"/>
    </location>
</feature>
<feature type="domain" description="Acylphosphatase-like" evidence="1">
    <location>
        <begin position="6"/>
        <end position="93"/>
    </location>
</feature>
<feature type="active site" evidence="1">
    <location>
        <position position="21"/>
    </location>
</feature>
<feature type="active site" evidence="1">
    <location>
        <position position="39"/>
    </location>
</feature>
<evidence type="ECO:0000255" key="1">
    <source>
        <dbReference type="PROSITE-ProRule" id="PRU00520"/>
    </source>
</evidence>
<evidence type="ECO:0000305" key="2"/>
<accession>Q39S27</accession>
<protein>
    <recommendedName>
        <fullName>Acylphosphatase</fullName>
        <ecNumber>3.6.1.7</ecNumber>
    </recommendedName>
    <alternativeName>
        <fullName>Acylphosphate phosphohydrolase</fullName>
    </alternativeName>
</protein>
<proteinExistence type="inferred from homology"/>
<comment type="catalytic activity">
    <reaction>
        <text>an acyl phosphate + H2O = a carboxylate + phosphate + H(+)</text>
        <dbReference type="Rhea" id="RHEA:14965"/>
        <dbReference type="ChEBI" id="CHEBI:15377"/>
        <dbReference type="ChEBI" id="CHEBI:15378"/>
        <dbReference type="ChEBI" id="CHEBI:29067"/>
        <dbReference type="ChEBI" id="CHEBI:43474"/>
        <dbReference type="ChEBI" id="CHEBI:59918"/>
        <dbReference type="EC" id="3.6.1.7"/>
    </reaction>
</comment>
<comment type="similarity">
    <text evidence="2">Belongs to the acylphosphatase family.</text>
</comment>
<gene>
    <name type="primary">acyP</name>
    <name type="ordered locus">Gmet_2729</name>
</gene>
<name>ACYP_GEOMG</name>
<keyword id="KW-0378">Hydrolase</keyword>
<keyword id="KW-1185">Reference proteome</keyword>
<organism>
    <name type="scientific">Geobacter metallireducens (strain ATCC 53774 / DSM 7210 / GS-15)</name>
    <dbReference type="NCBI Taxonomy" id="269799"/>
    <lineage>
        <taxon>Bacteria</taxon>
        <taxon>Pseudomonadati</taxon>
        <taxon>Thermodesulfobacteriota</taxon>
        <taxon>Desulfuromonadia</taxon>
        <taxon>Geobacterales</taxon>
        <taxon>Geobacteraceae</taxon>
        <taxon>Geobacter</taxon>
    </lineage>
</organism>
<reference key="1">
    <citation type="journal article" date="2009" name="BMC Microbiol.">
        <title>The genome sequence of Geobacter metallireducens: features of metabolism, physiology and regulation common and dissimilar to Geobacter sulfurreducens.</title>
        <authorList>
            <person name="Aklujkar M."/>
            <person name="Krushkal J."/>
            <person name="DiBartolo G."/>
            <person name="Lapidus A."/>
            <person name="Land M.L."/>
            <person name="Lovley D.R."/>
        </authorList>
    </citation>
    <scope>NUCLEOTIDE SEQUENCE [LARGE SCALE GENOMIC DNA]</scope>
    <source>
        <strain>ATCC 53774 / DSM 7210 / GS-15</strain>
    </source>
</reference>
<sequence>MTMKIRAIVTVKGLVQGVAFRHHTVLQGNQLRVTGWVKNLPNGDVQGCFEGDETDVQALVEWCHHGPSRARVDRVIVERKSFRGEFDTFDVRY</sequence>